<dbReference type="EC" id="2.7.1.228" evidence="8"/>
<dbReference type="EMBL" id="AF022365">
    <property type="protein sequence ID" value="AAB72226.1"/>
    <property type="molecule type" value="Genomic_DNA"/>
</dbReference>
<dbReference type="EMBL" id="X82086">
    <property type="protein sequence ID" value="CAA57599.1"/>
    <property type="molecule type" value="Genomic_DNA"/>
</dbReference>
<dbReference type="EMBL" id="Z46796">
    <property type="protein sequence ID" value="CAA86794.1"/>
    <property type="molecule type" value="Genomic_DNA"/>
</dbReference>
<dbReference type="EMBL" id="Z74368">
    <property type="protein sequence ID" value="CAA98890.1"/>
    <property type="molecule type" value="Genomic_DNA"/>
</dbReference>
<dbReference type="EMBL" id="Z74369">
    <property type="protein sequence ID" value="CAA98892.1"/>
    <property type="molecule type" value="Genomic_DNA"/>
</dbReference>
<dbReference type="EMBL" id="AY723772">
    <property type="protein sequence ID" value="AAU09689.1"/>
    <property type="molecule type" value="Genomic_DNA"/>
</dbReference>
<dbReference type="EMBL" id="BK006938">
    <property type="protein sequence ID" value="DAA11918.1"/>
    <property type="molecule type" value="Genomic_DNA"/>
</dbReference>
<dbReference type="PIR" id="S49827">
    <property type="entry name" value="S49827"/>
</dbReference>
<dbReference type="RefSeq" id="NP_010357.3">
    <property type="nucleotide sequence ID" value="NM_001180380.3"/>
</dbReference>
<dbReference type="BioGRID" id="32127">
    <property type="interactions" value="233"/>
</dbReference>
<dbReference type="DIP" id="DIP-5200N"/>
<dbReference type="FunCoup" id="P38954">
    <property type="interactions" value="84"/>
</dbReference>
<dbReference type="IntAct" id="P38954">
    <property type="interactions" value="4"/>
</dbReference>
<dbReference type="MINT" id="P38954"/>
<dbReference type="STRING" id="4932.YDR072C"/>
<dbReference type="SwissLipids" id="SLP:000001852"/>
<dbReference type="iPTMnet" id="P38954"/>
<dbReference type="PaxDb" id="4932-YDR072C"/>
<dbReference type="PeptideAtlas" id="P38954"/>
<dbReference type="TopDownProteomics" id="P38954"/>
<dbReference type="EnsemblFungi" id="YDR072C_mRNA">
    <property type="protein sequence ID" value="YDR072C"/>
    <property type="gene ID" value="YDR072C"/>
</dbReference>
<dbReference type="GeneID" id="851644"/>
<dbReference type="KEGG" id="sce:YDR072C"/>
<dbReference type="AGR" id="SGD:S000002479"/>
<dbReference type="SGD" id="S000002479">
    <property type="gene designation" value="IPT1"/>
</dbReference>
<dbReference type="VEuPathDB" id="FungiDB:YDR072C"/>
<dbReference type="eggNOG" id="ENOG502QPKA">
    <property type="taxonomic scope" value="Eukaryota"/>
</dbReference>
<dbReference type="GeneTree" id="ENSGT00940000176762"/>
<dbReference type="HOGENOM" id="CLU_047580_1_0_1"/>
<dbReference type="InParanoid" id="P38954"/>
<dbReference type="OMA" id="PMAPPWF"/>
<dbReference type="OrthoDB" id="5784at2759"/>
<dbReference type="BioCyc" id="MetaCyc:YDR072C-MONOMER"/>
<dbReference type="BioCyc" id="YEAST:YDR072C-MONOMER"/>
<dbReference type="BRENDA" id="2.7.1.228">
    <property type="organism ID" value="984"/>
</dbReference>
<dbReference type="BioGRID-ORCS" id="851644">
    <property type="hits" value="7 hits in 10 CRISPR screens"/>
</dbReference>
<dbReference type="PRO" id="PR:P38954"/>
<dbReference type="Proteomes" id="UP000002311">
    <property type="component" value="Chromosome IV"/>
</dbReference>
<dbReference type="RNAct" id="P38954">
    <property type="molecule type" value="protein"/>
</dbReference>
<dbReference type="GO" id="GO:0000139">
    <property type="term" value="C:Golgi membrane"/>
    <property type="evidence" value="ECO:0007669"/>
    <property type="project" value="UniProtKB-SubCell"/>
</dbReference>
<dbReference type="GO" id="GO:0070916">
    <property type="term" value="C:inositol phosphoceramide synthase complex"/>
    <property type="evidence" value="ECO:0000318"/>
    <property type="project" value="GO_Central"/>
</dbReference>
<dbReference type="GO" id="GO:0016020">
    <property type="term" value="C:membrane"/>
    <property type="evidence" value="ECO:0000314"/>
    <property type="project" value="SGD"/>
</dbReference>
<dbReference type="GO" id="GO:0016772">
    <property type="term" value="F:transferase activity, transferring phosphorus-containing groups"/>
    <property type="evidence" value="ECO:0000314"/>
    <property type="project" value="SGD"/>
</dbReference>
<dbReference type="GO" id="GO:0006676">
    <property type="term" value="P:mannosyl diphosphorylinositol ceramide metabolic process"/>
    <property type="evidence" value="ECO:0000314"/>
    <property type="project" value="SGD"/>
</dbReference>
<dbReference type="GO" id="GO:0010507">
    <property type="term" value="P:negative regulation of autophagy"/>
    <property type="evidence" value="ECO:0000316"/>
    <property type="project" value="SGD"/>
</dbReference>
<dbReference type="GO" id="GO:0030148">
    <property type="term" value="P:sphingolipid biosynthetic process"/>
    <property type="evidence" value="ECO:0000316"/>
    <property type="project" value="SGD"/>
</dbReference>
<dbReference type="CDD" id="cd03386">
    <property type="entry name" value="PAP2_Aur1_like"/>
    <property type="match status" value="1"/>
</dbReference>
<dbReference type="CDD" id="cd01610">
    <property type="entry name" value="PAP2_like"/>
    <property type="match status" value="1"/>
</dbReference>
<dbReference type="InterPro" id="IPR026841">
    <property type="entry name" value="Aur1/Ipt1"/>
</dbReference>
<dbReference type="InterPro" id="IPR052185">
    <property type="entry name" value="IPC_Synthase-Related"/>
</dbReference>
<dbReference type="PANTHER" id="PTHR31310">
    <property type="match status" value="1"/>
</dbReference>
<dbReference type="PANTHER" id="PTHR31310:SF8">
    <property type="entry name" value="INOSITOLPHOSPHOTRANSFERASE 1"/>
    <property type="match status" value="1"/>
</dbReference>
<dbReference type="Pfam" id="PF14378">
    <property type="entry name" value="PAP2_3"/>
    <property type="match status" value="1"/>
</dbReference>
<comment type="function">
    <text evidence="3 7 8">Catalyzes the addition of a phosphorylinositol group onto mannosyl phosphorylinositol ceramide (MIPC) to form mannosyl diphosphorylinositol ceramide (M(IP)2C), the major sphingolipid in membranes of S.cerevisiae.</text>
</comment>
<comment type="catalytic activity">
    <reaction evidence="8">
        <text>an alpha-D-mannosyl-(1&lt;-&gt;6)-1D-myo-inositol-1-phospho-N-[(R)-2-hydroxy-very-long-chain fatty acyl]-(R)-4-hydroxysphingoid base + a 1,2-diacyl-sn-glycero-3-phospho-(1D-myo-inositol) = an alpha-D-mannosyl-6-(1D-myo-inositol phospho)-(1&lt;-&gt;6)-1D-myo-inositol-1-phospho-N-[(R)-2-hydroxy-very-long-chain fatty acyl]-(R)-4-hydroxysphingoid base + a 1,2-diacyl-sn-glycerol</text>
        <dbReference type="Rhea" id="RHEA:64540"/>
        <dbReference type="ChEBI" id="CHEBI:17815"/>
        <dbReference type="ChEBI" id="CHEBI:57880"/>
        <dbReference type="ChEBI" id="CHEBI:155884"/>
        <dbReference type="ChEBI" id="CHEBI:155885"/>
        <dbReference type="EC" id="2.7.1.228"/>
    </reaction>
    <physiologicalReaction direction="left-to-right" evidence="8">
        <dbReference type="Rhea" id="RHEA:64541"/>
    </physiologicalReaction>
</comment>
<comment type="catalytic activity">
    <reaction evidence="3 7">
        <text>a mannosylinositol-1-phospho-N-acyl-sphingoid base + a 1,2-diacyl-sn-glycero-3-phospho-(1D-myo-inositol) = an inositol phosphomannosylnositol-1-phospho-N-acylsphingoid base + a 1,2-diacyl-sn-glycerol</text>
        <dbReference type="Rhea" id="RHEA:55604"/>
        <dbReference type="ChEBI" id="CHEBI:17815"/>
        <dbReference type="ChEBI" id="CHEBI:57880"/>
        <dbReference type="ChEBI" id="CHEBI:64997"/>
        <dbReference type="ChEBI" id="CHEBI:74997"/>
    </reaction>
    <physiologicalReaction direction="left-to-right" evidence="10 12">
        <dbReference type="Rhea" id="RHEA:55605"/>
    </physiologicalReaction>
</comment>
<comment type="catalytic activity">
    <reaction evidence="8">
        <text>a mannosylinositol-1-phospho-N-(2-hydroxyacyl)-4R-hydroxysphingoid base + a 1,2-diacyl-sn-glycero-3-phospho-(1D-myo-inositol) = an inositol phosphomannosylnositol-1-phospho-N-(2-hydroxyacyl)-4R-hydroxysphingoid base + a 1,2-diacyl-sn-glycerol</text>
        <dbReference type="Rhea" id="RHEA:55608"/>
        <dbReference type="ChEBI" id="CHEBI:17815"/>
        <dbReference type="ChEBI" id="CHEBI:57880"/>
        <dbReference type="ChEBI" id="CHEBI:74994"/>
        <dbReference type="ChEBI" id="CHEBI:75023"/>
    </reaction>
    <physiologicalReaction direction="left-to-right" evidence="13">
        <dbReference type="Rhea" id="RHEA:55609"/>
    </physiologicalReaction>
</comment>
<comment type="subcellular location">
    <subcellularLocation>
        <location evidence="5">Golgi apparatus membrane</location>
        <topology evidence="1">Multi-pass membrane protein</topology>
    </subcellularLocation>
</comment>
<comment type="disruption phenotype">
    <text evidence="8">Fails to accumulate M(IP)2C and instead accumulates increased amounts of the precursor mannose-inositol-P-ceramide.</text>
</comment>
<comment type="miscellaneous">
    <text evidence="4">Present with 606 molecules/cell in log phase SD medium.</text>
</comment>
<name>IPT1_YEAST</name>
<keyword id="KW-0333">Golgi apparatus</keyword>
<keyword id="KW-0472">Membrane</keyword>
<keyword id="KW-1185">Reference proteome</keyword>
<keyword id="KW-0808">Transferase</keyword>
<keyword id="KW-0812">Transmembrane</keyword>
<keyword id="KW-1133">Transmembrane helix</keyword>
<protein>
    <recommendedName>
        <fullName evidence="9">Inositolphosphotransferase 1</fullName>
        <ecNumber evidence="8">2.7.1.228</ecNumber>
    </recommendedName>
    <alternativeName>
        <fullName evidence="9">Mannosyl diphosphorylinositol ceramide synthase</fullName>
    </alternativeName>
</protein>
<proteinExistence type="evidence at protein level"/>
<organism>
    <name type="scientific">Saccharomyces cerevisiae (strain ATCC 204508 / S288c)</name>
    <name type="common">Baker's yeast</name>
    <dbReference type="NCBI Taxonomy" id="559292"/>
    <lineage>
        <taxon>Eukaryota</taxon>
        <taxon>Fungi</taxon>
        <taxon>Dikarya</taxon>
        <taxon>Ascomycota</taxon>
        <taxon>Saccharomycotina</taxon>
        <taxon>Saccharomycetes</taxon>
        <taxon>Saccharomycetales</taxon>
        <taxon>Saccharomycetaceae</taxon>
        <taxon>Saccharomyces</taxon>
    </lineage>
</organism>
<accession>P38954</accession>
<accession>D6VS58</accession>
<sequence>MNVIFSLASFVKNMYNASLNQRNLISLPFNFMLNFAPVFIWLSIFKRAGLIPIRLRPDIHSKFAFFADQFLFGDYWHELTVQLPDNTSKLFFWSFISSSAFLLVFLICIPFAIWYYIYYIKHVNYNLLEWFANIFHYPCKRKQRPIQKRFRTIFIPFALPLFTFVILNIDHFFAYQSDANFTKTKDLLAWFSYVILHLTAPILTAVYLYVFQPPGTLKCFSFALGLQNIAGVLTHLLVPMASPWFTHLYGIDDTEHVNYTQEGFAAGLIRVDSHLGTHLNTKGFHMSPIVFGAVPSLHSAIAFQCFLFLVSRSTSLKHRFSNAGGFTMHNNDSSTFKLSEEDSEDEGDNSIPPTIGPNDLEMEPLGTVEPVDISNERSSSPSSSFTVSSNERSTGGGDGSIINSNGNKKPLQFVHLYDEDTNFTNKWIFKIVNDGFIPKFWAILYIILQWWATMYLDHHYRFDLFVGVLYAMTSFIIINWFVLQPKVLKKWIHIRLGDKVDTRNEARTFGMRVFCGTKMEWFFDPLA</sequence>
<feature type="chain" id="PRO_0000084224" description="Inositolphosphotransferase 1">
    <location>
        <begin position="1"/>
        <end position="527"/>
    </location>
</feature>
<feature type="topological domain" description="Cytoplasmic" evidence="11">
    <location>
        <begin position="1"/>
        <end position="24"/>
    </location>
</feature>
<feature type="transmembrane region" description="Helical" evidence="1">
    <location>
        <begin position="25"/>
        <end position="45"/>
    </location>
</feature>
<feature type="topological domain" description="Lumenal" evidence="11">
    <location>
        <begin position="46"/>
        <end position="99"/>
    </location>
</feature>
<feature type="transmembrane region" description="Helical" evidence="1">
    <location>
        <begin position="100"/>
        <end position="120"/>
    </location>
</feature>
<feature type="topological domain" description="Cytoplasmic" evidence="11">
    <location>
        <begin position="121"/>
        <end position="152"/>
    </location>
</feature>
<feature type="transmembrane region" description="Helical" evidence="1">
    <location>
        <begin position="153"/>
        <end position="173"/>
    </location>
</feature>
<feature type="topological domain" description="Lumenal" evidence="11">
    <location>
        <begin position="174"/>
        <end position="190"/>
    </location>
</feature>
<feature type="transmembrane region" description="Helical" evidence="1">
    <location>
        <begin position="191"/>
        <end position="211"/>
    </location>
</feature>
<feature type="topological domain" description="Cytoplasmic" evidence="11">
    <location>
        <begin position="212"/>
        <end position="219"/>
    </location>
</feature>
<feature type="transmembrane region" description="Helical" evidence="1">
    <location>
        <begin position="220"/>
        <end position="240"/>
    </location>
</feature>
<feature type="topological domain" description="Lumenal" evidence="11">
    <location>
        <begin position="241"/>
        <end position="288"/>
    </location>
</feature>
<feature type="transmembrane region" description="Helical" evidence="1">
    <location>
        <begin position="289"/>
        <end position="309"/>
    </location>
</feature>
<feature type="topological domain" description="Cytoplasmic" evidence="11">
    <location>
        <begin position="310"/>
        <end position="435"/>
    </location>
</feature>
<feature type="transmembrane region" description="Helical" evidence="1">
    <location>
        <begin position="436"/>
        <end position="456"/>
    </location>
</feature>
<feature type="topological domain" description="Lumenal" evidence="11">
    <location>
        <begin position="457"/>
        <end position="461"/>
    </location>
</feature>
<feature type="transmembrane region" description="Helical" evidence="1">
    <location>
        <begin position="462"/>
        <end position="482"/>
    </location>
</feature>
<feature type="topological domain" description="Cytoplasmic" evidence="6">
    <location>
        <begin position="483"/>
        <end position="527"/>
    </location>
</feature>
<feature type="region of interest" description="Disordered" evidence="2">
    <location>
        <begin position="331"/>
        <end position="404"/>
    </location>
</feature>
<feature type="compositionally biased region" description="Low complexity" evidence="2">
    <location>
        <begin position="376"/>
        <end position="389"/>
    </location>
</feature>
<gene>
    <name evidence="9" type="primary">IPT1</name>
    <name type="synonym">SYR4</name>
    <name type="ordered locus">YDR072C</name>
    <name type="ORF">D4405</name>
    <name type="ORF">YD8554.05C</name>
</gene>
<reference key="1">
    <citation type="submission" date="1997-10" db="EMBL/GenBank/DDBJ databases">
        <title>SYR4: a syringomycin action gene required for mannosyl diphosphorylinositol ceramide synthesis in Saccharomyces cerevisiae.</title>
        <authorList>
            <person name="Stock S.D."/>
            <person name="Takemoto J.Y."/>
        </authorList>
    </citation>
    <scope>NUCLEOTIDE SEQUENCE [GENOMIC DNA]</scope>
</reference>
<reference key="2">
    <citation type="journal article" date="1995" name="Yeast">
        <title>Analysis of a 32.8 kb segment of yeast chromosome IV reveals 21 open reading frames, including TPS2, PPH3, RAD55, SED1, PDC2, AFR1, SSS1, SLU7 and a tRNA for arginine.</title>
        <authorList>
            <person name="Coster F."/>
            <person name="Jonniaux J.-L."/>
            <person name="Goffeau A."/>
        </authorList>
    </citation>
    <scope>NUCLEOTIDE SEQUENCE [GENOMIC DNA]</scope>
    <source>
        <strain>ATCC 96604 / S288c / FY1679</strain>
    </source>
</reference>
<reference key="3">
    <citation type="journal article" date="1997" name="Nature">
        <title>The nucleotide sequence of Saccharomyces cerevisiae chromosome IV.</title>
        <authorList>
            <person name="Jacq C."/>
            <person name="Alt-Moerbe J."/>
            <person name="Andre B."/>
            <person name="Arnold W."/>
            <person name="Bahr A."/>
            <person name="Ballesta J.P.G."/>
            <person name="Bargues M."/>
            <person name="Baron L."/>
            <person name="Becker A."/>
            <person name="Biteau N."/>
            <person name="Bloecker H."/>
            <person name="Blugeon C."/>
            <person name="Boskovic J."/>
            <person name="Brandt P."/>
            <person name="Brueckner M."/>
            <person name="Buitrago M.J."/>
            <person name="Coster F."/>
            <person name="Delaveau T."/>
            <person name="del Rey F."/>
            <person name="Dujon B."/>
            <person name="Eide L.G."/>
            <person name="Garcia-Cantalejo J.M."/>
            <person name="Goffeau A."/>
            <person name="Gomez-Peris A."/>
            <person name="Granotier C."/>
            <person name="Hanemann V."/>
            <person name="Hankeln T."/>
            <person name="Hoheisel J.D."/>
            <person name="Jaeger W."/>
            <person name="Jimenez A."/>
            <person name="Jonniaux J.-L."/>
            <person name="Kraemer C."/>
            <person name="Kuester H."/>
            <person name="Laamanen P."/>
            <person name="Legros Y."/>
            <person name="Louis E.J."/>
            <person name="Moeller-Rieker S."/>
            <person name="Monnet A."/>
            <person name="Moro M."/>
            <person name="Mueller-Auer S."/>
            <person name="Nussbaumer B."/>
            <person name="Paricio N."/>
            <person name="Paulin L."/>
            <person name="Perea J."/>
            <person name="Perez-Alonso M."/>
            <person name="Perez-Ortin J.E."/>
            <person name="Pohl T.M."/>
            <person name="Prydz H."/>
            <person name="Purnelle B."/>
            <person name="Rasmussen S.W."/>
            <person name="Remacha M.A."/>
            <person name="Revuelta J.L."/>
            <person name="Rieger M."/>
            <person name="Salom D."/>
            <person name="Saluz H.P."/>
            <person name="Saiz J.E."/>
            <person name="Saren A.-M."/>
            <person name="Schaefer M."/>
            <person name="Scharfe M."/>
            <person name="Schmidt E.R."/>
            <person name="Schneider C."/>
            <person name="Scholler P."/>
            <person name="Schwarz S."/>
            <person name="Soler-Mira A."/>
            <person name="Urrestarazu L.A."/>
            <person name="Verhasselt P."/>
            <person name="Vissers S."/>
            <person name="Voet M."/>
            <person name="Volckaert G."/>
            <person name="Wagner G."/>
            <person name="Wambutt R."/>
            <person name="Wedler E."/>
            <person name="Wedler H."/>
            <person name="Woelfl S."/>
            <person name="Harris D.E."/>
            <person name="Bowman S."/>
            <person name="Brown D."/>
            <person name="Churcher C.M."/>
            <person name="Connor R."/>
            <person name="Dedman K."/>
            <person name="Gentles S."/>
            <person name="Hamlin N."/>
            <person name="Hunt S."/>
            <person name="Jones L."/>
            <person name="McDonald S."/>
            <person name="Murphy L.D."/>
            <person name="Niblett D."/>
            <person name="Odell C."/>
            <person name="Oliver K."/>
            <person name="Rajandream M.A."/>
            <person name="Richards C."/>
            <person name="Shore L."/>
            <person name="Walsh S.V."/>
            <person name="Barrell B.G."/>
            <person name="Dietrich F.S."/>
            <person name="Mulligan J.T."/>
            <person name="Allen E."/>
            <person name="Araujo R."/>
            <person name="Aviles E."/>
            <person name="Berno A."/>
            <person name="Carpenter J."/>
            <person name="Chen E."/>
            <person name="Cherry J.M."/>
            <person name="Chung E."/>
            <person name="Duncan M."/>
            <person name="Hunicke-Smith S."/>
            <person name="Hyman R.W."/>
            <person name="Komp C."/>
            <person name="Lashkari D."/>
            <person name="Lew H."/>
            <person name="Lin D."/>
            <person name="Mosedale D."/>
            <person name="Nakahara K."/>
            <person name="Namath A."/>
            <person name="Oefner P."/>
            <person name="Oh C."/>
            <person name="Petel F.X."/>
            <person name="Roberts D."/>
            <person name="Schramm S."/>
            <person name="Schroeder M."/>
            <person name="Shogren T."/>
            <person name="Shroff N."/>
            <person name="Winant A."/>
            <person name="Yelton M.A."/>
            <person name="Botstein D."/>
            <person name="Davis R.W."/>
            <person name="Johnston M."/>
            <person name="Andrews S."/>
            <person name="Brinkman R."/>
            <person name="Cooper J."/>
            <person name="Ding H."/>
            <person name="Du Z."/>
            <person name="Favello A."/>
            <person name="Fulton L."/>
            <person name="Gattung S."/>
            <person name="Greco T."/>
            <person name="Hallsworth K."/>
            <person name="Hawkins J."/>
            <person name="Hillier L.W."/>
            <person name="Jier M."/>
            <person name="Johnson D."/>
            <person name="Johnston L."/>
            <person name="Kirsten J."/>
            <person name="Kucaba T."/>
            <person name="Langston Y."/>
            <person name="Latreille P."/>
            <person name="Le T."/>
            <person name="Mardis E."/>
            <person name="Menezes S."/>
            <person name="Miller N."/>
            <person name="Nhan M."/>
            <person name="Pauley A."/>
            <person name="Peluso D."/>
            <person name="Rifkin L."/>
            <person name="Riles L."/>
            <person name="Taich A."/>
            <person name="Trevaskis E."/>
            <person name="Vignati D."/>
            <person name="Wilcox L."/>
            <person name="Wohldman P."/>
            <person name="Vaudin M."/>
            <person name="Wilson R."/>
            <person name="Waterston R."/>
            <person name="Albermann K."/>
            <person name="Hani J."/>
            <person name="Heumann K."/>
            <person name="Kleine K."/>
            <person name="Mewes H.-W."/>
            <person name="Zollner A."/>
            <person name="Zaccaria P."/>
        </authorList>
    </citation>
    <scope>NUCLEOTIDE SEQUENCE [LARGE SCALE GENOMIC DNA]</scope>
    <source>
        <strain>ATCC 204508 / S288c</strain>
    </source>
</reference>
<reference key="4">
    <citation type="journal article" date="2014" name="G3 (Bethesda)">
        <title>The reference genome sequence of Saccharomyces cerevisiae: Then and now.</title>
        <authorList>
            <person name="Engel S.R."/>
            <person name="Dietrich F.S."/>
            <person name="Fisk D.G."/>
            <person name="Binkley G."/>
            <person name="Balakrishnan R."/>
            <person name="Costanzo M.C."/>
            <person name="Dwight S.S."/>
            <person name="Hitz B.C."/>
            <person name="Karra K."/>
            <person name="Nash R.S."/>
            <person name="Weng S."/>
            <person name="Wong E.D."/>
            <person name="Lloyd P."/>
            <person name="Skrzypek M.S."/>
            <person name="Miyasato S.R."/>
            <person name="Simison M."/>
            <person name="Cherry J.M."/>
        </authorList>
    </citation>
    <scope>GENOME REANNOTATION</scope>
    <source>
        <strain>ATCC 204508 / S288c</strain>
    </source>
</reference>
<reference key="5">
    <citation type="journal article" date="2007" name="Genome Res.">
        <title>Approaching a complete repository of sequence-verified protein-encoding clones for Saccharomyces cerevisiae.</title>
        <authorList>
            <person name="Hu Y."/>
            <person name="Rolfs A."/>
            <person name="Bhullar B."/>
            <person name="Murthy T.V.S."/>
            <person name="Zhu C."/>
            <person name="Berger M.F."/>
            <person name="Camargo A.A."/>
            <person name="Kelley F."/>
            <person name="McCarron S."/>
            <person name="Jepson D."/>
            <person name="Richardson A."/>
            <person name="Raphael J."/>
            <person name="Moreira D."/>
            <person name="Taycher E."/>
            <person name="Zuo D."/>
            <person name="Mohr S."/>
            <person name="Kane M.F."/>
            <person name="Williamson J."/>
            <person name="Simpson A.J.G."/>
            <person name="Bulyk M.L."/>
            <person name="Harlow E."/>
            <person name="Marsischky G."/>
            <person name="Kolodner R.D."/>
            <person name="LaBaer J."/>
        </authorList>
    </citation>
    <scope>NUCLEOTIDE SEQUENCE [GENOMIC DNA]</scope>
    <source>
        <strain>ATCC 204508 / S288c</strain>
    </source>
</reference>
<reference key="6">
    <citation type="journal article" date="1997" name="J. Biol. Chem.">
        <title>Synthesis of mannose-(inositol-P)2-ceramide, the major sphingolipid in Saccharomyces cerevisiae, requires the IPT1 (YDR072c) gene.</title>
        <authorList>
            <person name="Dickson R.C."/>
            <person name="Nagiec E.E."/>
            <person name="Wells G.B."/>
            <person name="Nagiec M.M."/>
            <person name="Lester R.L."/>
        </authorList>
    </citation>
    <scope>FUNCTION</scope>
    <scope>CATALYTIC ACTIVITY</scope>
    <scope>DISRUPTION PHENOTYPE</scope>
</reference>
<reference key="7">
    <citation type="journal article" date="2000" name="Proc. Natl. Acad. Sci. U.S.A.">
        <title>A gene encoding a sphingolipid biosynthesis enzyme determines the sensitivity of Saccharomyces cerevisiae to an antifungal plant defensin from dahlia (Dahlia merckii).</title>
        <authorList>
            <person name="Thevissen K."/>
            <person name="Cammue B.P."/>
            <person name="Lemaire K."/>
            <person name="Winderickx J."/>
            <person name="Dickson R.C."/>
            <person name="Lester R.L."/>
            <person name="Ferket K.K."/>
            <person name="Van Even F."/>
            <person name="Parret A.H."/>
            <person name="Broekaert W.F."/>
        </authorList>
    </citation>
    <scope>FUNCTION</scope>
</reference>
<reference key="8">
    <citation type="journal article" date="2003" name="Nature">
        <title>Global analysis of protein expression in yeast.</title>
        <authorList>
            <person name="Ghaemmaghami S."/>
            <person name="Huh W.-K."/>
            <person name="Bower K."/>
            <person name="Howson R.W."/>
            <person name="Belle A."/>
            <person name="Dephoure N."/>
            <person name="O'Shea E.K."/>
            <person name="Weissman J.S."/>
        </authorList>
    </citation>
    <scope>LEVEL OF PROTEIN EXPRESSION [LARGE SCALE ANALYSIS]</scope>
</reference>
<reference key="9">
    <citation type="journal article" date="2004" name="J. Biol. Chem.">
        <title>Protein sorting in the late Golgi of Saccharomyces cerevisiae does not require mannosylated sphingolipids.</title>
        <authorList>
            <person name="Lisman Q."/>
            <person name="Pomorski T."/>
            <person name="Vogelzangs C."/>
            <person name="Urli-Stam D."/>
            <person name="de Cocq van Delwijnen W."/>
            <person name="Holthuis J.C."/>
        </authorList>
    </citation>
    <scope>SUBCELLULAR LOCATION</scope>
</reference>
<reference key="10">
    <citation type="journal article" date="2006" name="Proc. Natl. Acad. Sci. U.S.A.">
        <title>A global topology map of the Saccharomyces cerevisiae membrane proteome.</title>
        <authorList>
            <person name="Kim H."/>
            <person name="Melen K."/>
            <person name="Oesterberg M."/>
            <person name="von Heijne G."/>
        </authorList>
    </citation>
    <scope>TOPOLOGY [LARGE SCALE ANALYSIS]</scope>
    <source>
        <strain>ATCC 208353 / W303-1A</strain>
    </source>
</reference>
<reference key="11">
    <citation type="journal article" date="2008" name="Mol. Cell. Proteomics">
        <title>A multidimensional chromatography technology for in-depth phosphoproteome analysis.</title>
        <authorList>
            <person name="Albuquerque C.P."/>
            <person name="Smolka M.B."/>
            <person name="Payne S.H."/>
            <person name="Bafna V."/>
            <person name="Eng J."/>
            <person name="Zhou H."/>
        </authorList>
    </citation>
    <scope>IDENTIFICATION BY MASS SPECTROMETRY [LARGE SCALE ANALYSIS]</scope>
</reference>
<reference key="12">
    <citation type="journal article" date="2009" name="Science">
        <title>Global analysis of Cdk1 substrate phosphorylation sites provides insights into evolution.</title>
        <authorList>
            <person name="Holt L.J."/>
            <person name="Tuch B.B."/>
            <person name="Villen J."/>
            <person name="Johnson A.D."/>
            <person name="Gygi S.P."/>
            <person name="Morgan D.O."/>
        </authorList>
    </citation>
    <scope>IDENTIFICATION BY MASS SPECTROMETRY [LARGE SCALE ANALYSIS]</scope>
</reference>
<reference key="13">
    <citation type="journal article" date="2012" name="Microbiology">
        <title>Expression of budding yeast IPT1 produces mannosyldiinositol phosphorylceramide in fission yeast and inhibits cell growth.</title>
        <authorList>
            <person name="Nakase M."/>
            <person name="Tani M."/>
            <person name="Takegawa K."/>
        </authorList>
    </citation>
    <scope>FUNCTION</scope>
</reference>
<evidence type="ECO:0000255" key="1"/>
<evidence type="ECO:0000256" key="2">
    <source>
        <dbReference type="SAM" id="MobiDB-lite"/>
    </source>
</evidence>
<evidence type="ECO:0000269" key="3">
    <source>
    </source>
</evidence>
<evidence type="ECO:0000269" key="4">
    <source>
    </source>
</evidence>
<evidence type="ECO:0000269" key="5">
    <source>
    </source>
</evidence>
<evidence type="ECO:0000269" key="6">
    <source>
    </source>
</evidence>
<evidence type="ECO:0000269" key="7">
    <source>
    </source>
</evidence>
<evidence type="ECO:0000269" key="8">
    <source>
    </source>
</evidence>
<evidence type="ECO:0000303" key="9">
    <source>
    </source>
</evidence>
<evidence type="ECO:0000305" key="10">
    <source>
    </source>
</evidence>
<evidence type="ECO:0000305" key="11">
    <source>
    </source>
</evidence>
<evidence type="ECO:0000305" key="12">
    <source>
    </source>
</evidence>
<evidence type="ECO:0000305" key="13">
    <source>
    </source>
</evidence>